<evidence type="ECO:0000255" key="1">
    <source>
        <dbReference type="HAMAP-Rule" id="MF_01846"/>
    </source>
</evidence>
<proteinExistence type="inferred from homology"/>
<comment type="function">
    <text evidence="1">Catalyzes the hydrolysis of nucleoside triphosphates, with a preference for pyrimidine deoxynucleoside triphosphates (dUTP, dTTP and dCTP).</text>
</comment>
<comment type="catalytic activity">
    <reaction evidence="1">
        <text>a ribonucleoside 5'-triphosphate + H2O = a ribonucleoside 5'-phosphate + diphosphate + H(+)</text>
        <dbReference type="Rhea" id="RHEA:23996"/>
        <dbReference type="ChEBI" id="CHEBI:15377"/>
        <dbReference type="ChEBI" id="CHEBI:15378"/>
        <dbReference type="ChEBI" id="CHEBI:33019"/>
        <dbReference type="ChEBI" id="CHEBI:58043"/>
        <dbReference type="ChEBI" id="CHEBI:61557"/>
        <dbReference type="EC" id="3.6.1.9"/>
    </reaction>
</comment>
<comment type="catalytic activity">
    <reaction evidence="1">
        <text>a 2'-deoxyribonucleoside 5'-triphosphate + H2O = a 2'-deoxyribonucleoside 5'-phosphate + diphosphate + H(+)</text>
        <dbReference type="Rhea" id="RHEA:44644"/>
        <dbReference type="ChEBI" id="CHEBI:15377"/>
        <dbReference type="ChEBI" id="CHEBI:15378"/>
        <dbReference type="ChEBI" id="CHEBI:33019"/>
        <dbReference type="ChEBI" id="CHEBI:61560"/>
        <dbReference type="ChEBI" id="CHEBI:65317"/>
        <dbReference type="EC" id="3.6.1.9"/>
    </reaction>
</comment>
<comment type="catalytic activity">
    <reaction evidence="1">
        <text>dUTP + H2O = dUMP + diphosphate + H(+)</text>
        <dbReference type="Rhea" id="RHEA:10248"/>
        <dbReference type="ChEBI" id="CHEBI:15377"/>
        <dbReference type="ChEBI" id="CHEBI:15378"/>
        <dbReference type="ChEBI" id="CHEBI:33019"/>
        <dbReference type="ChEBI" id="CHEBI:61555"/>
        <dbReference type="ChEBI" id="CHEBI:246422"/>
        <dbReference type="EC" id="3.6.1.9"/>
    </reaction>
</comment>
<comment type="catalytic activity">
    <reaction evidence="1">
        <text>dUTP + H2O = dUMP + diphosphate + H(+)</text>
        <dbReference type="Rhea" id="RHEA:10248"/>
        <dbReference type="ChEBI" id="CHEBI:15377"/>
        <dbReference type="ChEBI" id="CHEBI:15378"/>
        <dbReference type="ChEBI" id="CHEBI:33019"/>
        <dbReference type="ChEBI" id="CHEBI:61555"/>
        <dbReference type="ChEBI" id="CHEBI:246422"/>
        <dbReference type="EC" id="3.6.1.23"/>
    </reaction>
</comment>
<comment type="catalytic activity">
    <reaction evidence="1">
        <text>dTTP + H2O = dTMP + diphosphate + H(+)</text>
        <dbReference type="Rhea" id="RHEA:28534"/>
        <dbReference type="ChEBI" id="CHEBI:15377"/>
        <dbReference type="ChEBI" id="CHEBI:15378"/>
        <dbReference type="ChEBI" id="CHEBI:33019"/>
        <dbReference type="ChEBI" id="CHEBI:37568"/>
        <dbReference type="ChEBI" id="CHEBI:63528"/>
        <dbReference type="EC" id="3.6.1.9"/>
    </reaction>
</comment>
<comment type="catalytic activity">
    <reaction evidence="1">
        <text>dCTP + H2O = dCMP + diphosphate + H(+)</text>
        <dbReference type="Rhea" id="RHEA:22636"/>
        <dbReference type="ChEBI" id="CHEBI:15377"/>
        <dbReference type="ChEBI" id="CHEBI:15378"/>
        <dbReference type="ChEBI" id="CHEBI:33019"/>
        <dbReference type="ChEBI" id="CHEBI:57566"/>
        <dbReference type="ChEBI" id="CHEBI:61481"/>
        <dbReference type="EC" id="3.6.1.9"/>
    </reaction>
</comment>
<comment type="catalytic activity">
    <reaction evidence="1">
        <text>dCTP + H2O = dCMP + diphosphate + H(+)</text>
        <dbReference type="Rhea" id="RHEA:22636"/>
        <dbReference type="ChEBI" id="CHEBI:15377"/>
        <dbReference type="ChEBI" id="CHEBI:15378"/>
        <dbReference type="ChEBI" id="CHEBI:33019"/>
        <dbReference type="ChEBI" id="CHEBI:57566"/>
        <dbReference type="ChEBI" id="CHEBI:61481"/>
        <dbReference type="EC" id="3.6.1.12"/>
    </reaction>
</comment>
<comment type="cofactor">
    <cofactor evidence="1">
        <name>Mg(2+)</name>
        <dbReference type="ChEBI" id="CHEBI:18420"/>
    </cofactor>
</comment>
<comment type="subunit">
    <text evidence="1">Monomer.</text>
</comment>
<comment type="similarity">
    <text evidence="1">Belongs to the Nudix hydrolase family. NudI subfamily.</text>
</comment>
<feature type="chain" id="PRO_1000216108" description="Nucleoside triphosphatase NudI">
    <location>
        <begin position="1"/>
        <end position="141"/>
    </location>
</feature>
<feature type="domain" description="Nudix hydrolase" evidence="1">
    <location>
        <begin position="1"/>
        <end position="141"/>
    </location>
</feature>
<feature type="short sequence motif" description="Nudix box">
    <location>
        <begin position="38"/>
        <end position="59"/>
    </location>
</feature>
<protein>
    <recommendedName>
        <fullName evidence="1">Nucleoside triphosphatase NudI</fullName>
        <ecNumber evidence="1">3.6.1.9</ecNumber>
    </recommendedName>
    <alternativeName>
        <fullName evidence="1">Nucleotide diphosphatase NudI</fullName>
    </alternativeName>
    <alternativeName>
        <fullName evidence="1">Pyrimidine deoxynucleoside triphosphate diphosphatase</fullName>
    </alternativeName>
    <alternativeName>
        <fullName evidence="1">dCTP diphosphatase</fullName>
        <ecNumber evidence="1">3.6.1.12</ecNumber>
    </alternativeName>
    <alternativeName>
        <fullName evidence="1">dTTP diphosphatase</fullName>
        <ecNumber evidence="1">3.6.1.-</ecNumber>
    </alternativeName>
    <alternativeName>
        <fullName evidence="1">dUTP diphosphatase</fullName>
        <ecNumber evidence="1">3.6.1.23</ecNumber>
    </alternativeName>
</protein>
<gene>
    <name evidence="1" type="primary">nudI</name>
    <name type="ordered locus">BWG_2024</name>
</gene>
<dbReference type="EC" id="3.6.1.9" evidence="1"/>
<dbReference type="EC" id="3.6.1.12" evidence="1"/>
<dbReference type="EC" id="3.6.1.-" evidence="1"/>
<dbReference type="EC" id="3.6.1.23" evidence="1"/>
<dbReference type="EMBL" id="CP001396">
    <property type="protein sequence ID" value="ACR64699.1"/>
    <property type="molecule type" value="Genomic_DNA"/>
</dbReference>
<dbReference type="RefSeq" id="WP_001300564.1">
    <property type="nucleotide sequence ID" value="NC_012759.1"/>
</dbReference>
<dbReference type="SMR" id="C4ZU93"/>
<dbReference type="KEGG" id="ebw:BWG_2024"/>
<dbReference type="HOGENOM" id="CLU_037162_31_0_6"/>
<dbReference type="GO" id="GO:0047840">
    <property type="term" value="F:dCTP diphosphatase activity"/>
    <property type="evidence" value="ECO:0007669"/>
    <property type="project" value="UniProtKB-EC"/>
</dbReference>
<dbReference type="GO" id="GO:0036218">
    <property type="term" value="F:dTTP diphosphatase activity"/>
    <property type="evidence" value="ECO:0007669"/>
    <property type="project" value="RHEA"/>
</dbReference>
<dbReference type="GO" id="GO:0004170">
    <property type="term" value="F:dUTP diphosphatase activity"/>
    <property type="evidence" value="ECO:0007669"/>
    <property type="project" value="UniProtKB-EC"/>
</dbReference>
<dbReference type="GO" id="GO:0000287">
    <property type="term" value="F:magnesium ion binding"/>
    <property type="evidence" value="ECO:0007669"/>
    <property type="project" value="UniProtKB-UniRule"/>
</dbReference>
<dbReference type="FunFam" id="3.90.79.10:FF:000039">
    <property type="entry name" value="Nucleoside triphosphatase NudI"/>
    <property type="match status" value="1"/>
</dbReference>
<dbReference type="Gene3D" id="3.90.79.10">
    <property type="entry name" value="Nucleoside Triphosphate Pyrophosphohydrolase"/>
    <property type="match status" value="1"/>
</dbReference>
<dbReference type="HAMAP" id="MF_01846">
    <property type="entry name" value="Nudix_NudI"/>
    <property type="match status" value="1"/>
</dbReference>
<dbReference type="InterPro" id="IPR023781">
    <property type="entry name" value="Nucleoside_triphosphatase_NudI"/>
</dbReference>
<dbReference type="InterPro" id="IPR020476">
    <property type="entry name" value="Nudix_hydrolase"/>
</dbReference>
<dbReference type="InterPro" id="IPR015797">
    <property type="entry name" value="NUDIX_hydrolase-like_dom_sf"/>
</dbReference>
<dbReference type="InterPro" id="IPR020084">
    <property type="entry name" value="NUDIX_hydrolase_CS"/>
</dbReference>
<dbReference type="InterPro" id="IPR000086">
    <property type="entry name" value="NUDIX_hydrolase_dom"/>
</dbReference>
<dbReference type="NCBIfam" id="NF012016">
    <property type="entry name" value="PRK15472.1"/>
    <property type="match status" value="1"/>
</dbReference>
<dbReference type="PANTHER" id="PTHR43046">
    <property type="entry name" value="GDP-MANNOSE MANNOSYL HYDROLASE"/>
    <property type="match status" value="1"/>
</dbReference>
<dbReference type="PANTHER" id="PTHR43046:SF14">
    <property type="entry name" value="MUTT_NUDIX FAMILY PROTEIN"/>
    <property type="match status" value="1"/>
</dbReference>
<dbReference type="Pfam" id="PF00293">
    <property type="entry name" value="NUDIX"/>
    <property type="match status" value="1"/>
</dbReference>
<dbReference type="PRINTS" id="PR00502">
    <property type="entry name" value="NUDIXFAMILY"/>
</dbReference>
<dbReference type="SUPFAM" id="SSF55811">
    <property type="entry name" value="Nudix"/>
    <property type="match status" value="1"/>
</dbReference>
<dbReference type="PROSITE" id="PS51462">
    <property type="entry name" value="NUDIX"/>
    <property type="match status" value="1"/>
</dbReference>
<dbReference type="PROSITE" id="PS00893">
    <property type="entry name" value="NUDIX_BOX"/>
    <property type="match status" value="1"/>
</dbReference>
<name>NUDI_ECOBW</name>
<reference key="1">
    <citation type="journal article" date="2009" name="J. Bacteriol.">
        <title>Genomic sequencing reveals regulatory mutations and recombinational events in the widely used MC4100 lineage of Escherichia coli K-12.</title>
        <authorList>
            <person name="Ferenci T."/>
            <person name="Zhou Z."/>
            <person name="Betteridge T."/>
            <person name="Ren Y."/>
            <person name="Liu Y."/>
            <person name="Feng L."/>
            <person name="Reeves P.R."/>
            <person name="Wang L."/>
        </authorList>
    </citation>
    <scope>NUCLEOTIDE SEQUENCE [LARGE SCALE GENOMIC DNA]</scope>
    <source>
        <strain>K12 / MC4100 / BW2952</strain>
    </source>
</reference>
<keyword id="KW-0378">Hydrolase</keyword>
<keyword id="KW-0460">Magnesium</keyword>
<keyword id="KW-0479">Metal-binding</keyword>
<accession>C4ZU93</accession>
<organism>
    <name type="scientific">Escherichia coli (strain K12 / MC4100 / BW2952)</name>
    <dbReference type="NCBI Taxonomy" id="595496"/>
    <lineage>
        <taxon>Bacteria</taxon>
        <taxon>Pseudomonadati</taxon>
        <taxon>Pseudomonadota</taxon>
        <taxon>Gammaproteobacteria</taxon>
        <taxon>Enterobacterales</taxon>
        <taxon>Enterobacteriaceae</taxon>
        <taxon>Escherichia</taxon>
    </lineage>
</organism>
<sequence length="141" mass="16371">MRQRTIVCPLIQNDGAYLLCKMADDRGVFPGQWAISGGGVEPGERIEEALRREIREELGEQLLLTEITPWTFSDDIRTKTYADGRKEEIYMIYLIFDCVSANREVKINEEFQDYAWVKPEDLVHYDLNVATRKTLRLKGLL</sequence>